<accession>A6LD62</accession>
<protein>
    <recommendedName>
        <fullName evidence="1">Ribonuclease Y</fullName>
        <shortName evidence="1">RNase Y</shortName>
        <ecNumber evidence="1">3.1.-.-</ecNumber>
    </recommendedName>
</protein>
<reference key="1">
    <citation type="journal article" date="2007" name="PLoS Biol.">
        <title>Evolution of symbiotic bacteria in the distal human intestine.</title>
        <authorList>
            <person name="Xu J."/>
            <person name="Mahowald M.A."/>
            <person name="Ley R.E."/>
            <person name="Lozupone C.A."/>
            <person name="Hamady M."/>
            <person name="Martens E.C."/>
            <person name="Henrissat B."/>
            <person name="Coutinho P.M."/>
            <person name="Minx P."/>
            <person name="Latreille P."/>
            <person name="Cordum H."/>
            <person name="Van Brunt A."/>
            <person name="Kim K."/>
            <person name="Fulton R.S."/>
            <person name="Fulton L.A."/>
            <person name="Clifton S.W."/>
            <person name="Wilson R.K."/>
            <person name="Knight R.D."/>
            <person name="Gordon J.I."/>
        </authorList>
    </citation>
    <scope>NUCLEOTIDE SEQUENCE [LARGE SCALE GENOMIC DNA]</scope>
    <source>
        <strain>ATCC 8503 / DSM 20701 / CIP 104284 / JCM 5825 / NCTC 11152</strain>
    </source>
</reference>
<dbReference type="EC" id="3.1.-.-" evidence="1"/>
<dbReference type="EMBL" id="CP000140">
    <property type="protein sequence ID" value="ABR43626.1"/>
    <property type="molecule type" value="Genomic_DNA"/>
</dbReference>
<dbReference type="RefSeq" id="WP_005854819.1">
    <property type="nucleotide sequence ID" value="NZ_LR215978.1"/>
</dbReference>
<dbReference type="SMR" id="A6LD62"/>
<dbReference type="STRING" id="435591.BDI_1891"/>
<dbReference type="PaxDb" id="435591-BDI_1891"/>
<dbReference type="GeneID" id="93521874"/>
<dbReference type="KEGG" id="pdi:BDI_1891"/>
<dbReference type="eggNOG" id="COG1418">
    <property type="taxonomic scope" value="Bacteria"/>
</dbReference>
<dbReference type="HOGENOM" id="CLU_028328_1_0_10"/>
<dbReference type="BioCyc" id="PDIS435591:G1G5A-1944-MONOMER"/>
<dbReference type="Proteomes" id="UP000000566">
    <property type="component" value="Chromosome"/>
</dbReference>
<dbReference type="GO" id="GO:0005886">
    <property type="term" value="C:plasma membrane"/>
    <property type="evidence" value="ECO:0007669"/>
    <property type="project" value="UniProtKB-SubCell"/>
</dbReference>
<dbReference type="GO" id="GO:0003723">
    <property type="term" value="F:RNA binding"/>
    <property type="evidence" value="ECO:0007669"/>
    <property type="project" value="UniProtKB-UniRule"/>
</dbReference>
<dbReference type="GO" id="GO:0004521">
    <property type="term" value="F:RNA endonuclease activity"/>
    <property type="evidence" value="ECO:0007669"/>
    <property type="project" value="UniProtKB-UniRule"/>
</dbReference>
<dbReference type="GO" id="GO:0006402">
    <property type="term" value="P:mRNA catabolic process"/>
    <property type="evidence" value="ECO:0007669"/>
    <property type="project" value="UniProtKB-UniRule"/>
</dbReference>
<dbReference type="CDD" id="cd00077">
    <property type="entry name" value="HDc"/>
    <property type="match status" value="1"/>
</dbReference>
<dbReference type="CDD" id="cd22431">
    <property type="entry name" value="KH-I_RNaseY"/>
    <property type="match status" value="1"/>
</dbReference>
<dbReference type="FunFam" id="1.10.3210.10:FF:000013">
    <property type="entry name" value="Ribonuclease Y"/>
    <property type="match status" value="1"/>
</dbReference>
<dbReference type="Gene3D" id="1.10.3210.10">
    <property type="entry name" value="Hypothetical protein af1432"/>
    <property type="match status" value="1"/>
</dbReference>
<dbReference type="Gene3D" id="3.30.1370.10">
    <property type="entry name" value="K Homology domain, type 1"/>
    <property type="match status" value="1"/>
</dbReference>
<dbReference type="HAMAP" id="MF_00335">
    <property type="entry name" value="RNase_Y"/>
    <property type="match status" value="1"/>
</dbReference>
<dbReference type="InterPro" id="IPR003607">
    <property type="entry name" value="HD/PDEase_dom"/>
</dbReference>
<dbReference type="InterPro" id="IPR006674">
    <property type="entry name" value="HD_domain"/>
</dbReference>
<dbReference type="InterPro" id="IPR006675">
    <property type="entry name" value="HDIG_dom"/>
</dbReference>
<dbReference type="InterPro" id="IPR004087">
    <property type="entry name" value="KH_dom"/>
</dbReference>
<dbReference type="InterPro" id="IPR004088">
    <property type="entry name" value="KH_dom_type_1"/>
</dbReference>
<dbReference type="InterPro" id="IPR036612">
    <property type="entry name" value="KH_dom_type_1_sf"/>
</dbReference>
<dbReference type="InterPro" id="IPR017705">
    <property type="entry name" value="Ribonuclease_Y"/>
</dbReference>
<dbReference type="InterPro" id="IPR022711">
    <property type="entry name" value="RNase_Y_N"/>
</dbReference>
<dbReference type="NCBIfam" id="TIGR00277">
    <property type="entry name" value="HDIG"/>
    <property type="match status" value="1"/>
</dbReference>
<dbReference type="NCBIfam" id="TIGR03319">
    <property type="entry name" value="RNase_Y"/>
    <property type="match status" value="1"/>
</dbReference>
<dbReference type="PANTHER" id="PTHR12826">
    <property type="entry name" value="RIBONUCLEASE Y"/>
    <property type="match status" value="1"/>
</dbReference>
<dbReference type="PANTHER" id="PTHR12826:SF15">
    <property type="entry name" value="RIBONUCLEASE Y"/>
    <property type="match status" value="1"/>
</dbReference>
<dbReference type="Pfam" id="PF01966">
    <property type="entry name" value="HD"/>
    <property type="match status" value="1"/>
</dbReference>
<dbReference type="Pfam" id="PF00013">
    <property type="entry name" value="KH_1"/>
    <property type="match status" value="1"/>
</dbReference>
<dbReference type="Pfam" id="PF12072">
    <property type="entry name" value="RNase_Y_N"/>
    <property type="match status" value="1"/>
</dbReference>
<dbReference type="SMART" id="SM00471">
    <property type="entry name" value="HDc"/>
    <property type="match status" value="1"/>
</dbReference>
<dbReference type="SMART" id="SM00322">
    <property type="entry name" value="KH"/>
    <property type="match status" value="1"/>
</dbReference>
<dbReference type="SUPFAM" id="SSF54791">
    <property type="entry name" value="Eukaryotic type KH-domain (KH-domain type I)"/>
    <property type="match status" value="1"/>
</dbReference>
<dbReference type="SUPFAM" id="SSF109604">
    <property type="entry name" value="HD-domain/PDEase-like"/>
    <property type="match status" value="1"/>
</dbReference>
<dbReference type="PROSITE" id="PS51831">
    <property type="entry name" value="HD"/>
    <property type="match status" value="1"/>
</dbReference>
<dbReference type="PROSITE" id="PS50084">
    <property type="entry name" value="KH_TYPE_1"/>
    <property type="match status" value="1"/>
</dbReference>
<name>RNY_PARD8</name>
<organism>
    <name type="scientific">Parabacteroides distasonis (strain ATCC 8503 / DSM 20701 / CIP 104284 / JCM 5825 / NCTC 11152)</name>
    <dbReference type="NCBI Taxonomy" id="435591"/>
    <lineage>
        <taxon>Bacteria</taxon>
        <taxon>Pseudomonadati</taxon>
        <taxon>Bacteroidota</taxon>
        <taxon>Bacteroidia</taxon>
        <taxon>Bacteroidales</taxon>
        <taxon>Tannerellaceae</taxon>
        <taxon>Parabacteroides</taxon>
    </lineage>
</organism>
<gene>
    <name evidence="1" type="primary">rny</name>
    <name type="ordered locus">BDI_1891</name>
</gene>
<comment type="function">
    <text evidence="1">Endoribonuclease that initiates mRNA decay.</text>
</comment>
<comment type="subcellular location">
    <subcellularLocation>
        <location evidence="1">Cell membrane</location>
        <topology evidence="1">Single-pass membrane protein</topology>
    </subcellularLocation>
</comment>
<comment type="similarity">
    <text evidence="1">Belongs to the RNase Y family.</text>
</comment>
<feature type="chain" id="PRO_0000344915" description="Ribonuclease Y">
    <location>
        <begin position="1"/>
        <end position="512"/>
    </location>
</feature>
<feature type="transmembrane region" description="Helical" evidence="1">
    <location>
        <begin position="2"/>
        <end position="22"/>
    </location>
</feature>
<feature type="domain" description="KH" evidence="1">
    <location>
        <begin position="202"/>
        <end position="262"/>
    </location>
</feature>
<feature type="domain" description="HD" evidence="2">
    <location>
        <begin position="328"/>
        <end position="421"/>
    </location>
</feature>
<sequence length="512" mass="57588">MVGMYIIIPIVTFIIGGLLAWLGMRFLLKSKYDSVLQEAEKEAEVIKKNKMLEVKEKFLHLKADLEKQVSQRNAKIQSVETKLKQRELTMNQRQEELQRRNNEVEAVKENLSSQLELVEKKKQDLDKLHQKEVEHLEAISGLSAEEAKERLIESLKDEAKTQAASYINEIVEEAKMTANKEAKKIVIQSIQRVATETAIENSITVFHIESDEIKGRIIGREGRNIRALEAATGIEIVVDDTPEAIVLSGFDPVRREIARLALHQLVQDGRIHPARIEEVVTKVKKQVEDEVVETGKRTVIDLGVHGLHPELIRMIGKMKYRSSYGQNLLQHARETANLCAVMASELGLNPKKAKRAGLLHDIGKVPDDEPELPHAILGMKLCEKYKEKPDICNAVGAHHDEVEMQTLLAPIVQVCDAISGARPGARREIVEAYIKRLNDLEQLALSYPGVVKTYAIQAGRELRVIVGADKIDDKDTENLSAEIAKKIQDEMTYPGQVKITVIRETRAVSYAK</sequence>
<keyword id="KW-1003">Cell membrane</keyword>
<keyword id="KW-0255">Endonuclease</keyword>
<keyword id="KW-0378">Hydrolase</keyword>
<keyword id="KW-0472">Membrane</keyword>
<keyword id="KW-0540">Nuclease</keyword>
<keyword id="KW-1185">Reference proteome</keyword>
<keyword id="KW-0694">RNA-binding</keyword>
<keyword id="KW-0812">Transmembrane</keyword>
<keyword id="KW-1133">Transmembrane helix</keyword>
<proteinExistence type="inferred from homology"/>
<evidence type="ECO:0000255" key="1">
    <source>
        <dbReference type="HAMAP-Rule" id="MF_00335"/>
    </source>
</evidence>
<evidence type="ECO:0000255" key="2">
    <source>
        <dbReference type="PROSITE-ProRule" id="PRU01175"/>
    </source>
</evidence>